<feature type="chain" id="PRO_1000140205" description="Heme-degrading monooxygenase">
    <location>
        <begin position="1"/>
        <end position="107"/>
    </location>
</feature>
<feature type="domain" description="ABM" evidence="1">
    <location>
        <begin position="2"/>
        <end position="94"/>
    </location>
</feature>
<feature type="binding site" evidence="1">
    <location>
        <position position="6"/>
    </location>
    <ligand>
        <name>Fe cation</name>
        <dbReference type="ChEBI" id="CHEBI:24875"/>
    </ligand>
</feature>
<feature type="binding site" description="axial binding residue" evidence="1">
    <location>
        <position position="76"/>
    </location>
    <ligand>
        <name>heme</name>
        <dbReference type="ChEBI" id="CHEBI:30413"/>
    </ligand>
    <ligandPart>
        <name>Fe</name>
        <dbReference type="ChEBI" id="CHEBI:18248"/>
    </ligandPart>
</feature>
<feature type="site" description="Transition state stabilizer" evidence="1">
    <location>
        <position position="66"/>
    </location>
</feature>
<evidence type="ECO:0000255" key="1">
    <source>
        <dbReference type="HAMAP-Rule" id="MF_01272"/>
    </source>
</evidence>
<proteinExistence type="inferred from homology"/>
<dbReference type="EC" id="1.14.14.18" evidence="1"/>
<dbReference type="EMBL" id="CP000903">
    <property type="protein sequence ID" value="ABY45529.1"/>
    <property type="molecule type" value="Genomic_DNA"/>
</dbReference>
<dbReference type="RefSeq" id="WP_002015426.1">
    <property type="nucleotide sequence ID" value="NC_010184.1"/>
</dbReference>
<dbReference type="SMR" id="A9VJK2"/>
<dbReference type="GeneID" id="66265903"/>
<dbReference type="KEGG" id="bwe:BcerKBAB4_4370"/>
<dbReference type="eggNOG" id="COG2329">
    <property type="taxonomic scope" value="Bacteria"/>
</dbReference>
<dbReference type="HOGENOM" id="CLU_141544_2_1_9"/>
<dbReference type="Proteomes" id="UP000002154">
    <property type="component" value="Chromosome"/>
</dbReference>
<dbReference type="GO" id="GO:0005737">
    <property type="term" value="C:cytoplasm"/>
    <property type="evidence" value="ECO:0007669"/>
    <property type="project" value="UniProtKB-SubCell"/>
</dbReference>
<dbReference type="GO" id="GO:0020037">
    <property type="term" value="F:heme binding"/>
    <property type="evidence" value="ECO:0007669"/>
    <property type="project" value="UniProtKB-UniRule"/>
</dbReference>
<dbReference type="GO" id="GO:0004392">
    <property type="term" value="F:heme oxygenase (decyclizing) activity"/>
    <property type="evidence" value="ECO:0007669"/>
    <property type="project" value="UniProtKB-UniRule"/>
</dbReference>
<dbReference type="GO" id="GO:0005506">
    <property type="term" value="F:iron ion binding"/>
    <property type="evidence" value="ECO:0007669"/>
    <property type="project" value="UniProtKB-UniRule"/>
</dbReference>
<dbReference type="GO" id="GO:0042167">
    <property type="term" value="P:heme catabolic process"/>
    <property type="evidence" value="ECO:0007669"/>
    <property type="project" value="UniProtKB-UniRule"/>
</dbReference>
<dbReference type="GO" id="GO:0033212">
    <property type="term" value="P:iron import into cell"/>
    <property type="evidence" value="ECO:0007669"/>
    <property type="project" value="InterPro"/>
</dbReference>
<dbReference type="Gene3D" id="3.30.70.100">
    <property type="match status" value="1"/>
</dbReference>
<dbReference type="HAMAP" id="MF_01272">
    <property type="entry name" value="Heme_degrading_monooxygenase"/>
    <property type="match status" value="1"/>
</dbReference>
<dbReference type="InterPro" id="IPR007138">
    <property type="entry name" value="ABM_dom"/>
</dbReference>
<dbReference type="InterPro" id="IPR011008">
    <property type="entry name" value="Dimeric_a/b-barrel"/>
</dbReference>
<dbReference type="InterPro" id="IPR050404">
    <property type="entry name" value="Heme-degrading_MO"/>
</dbReference>
<dbReference type="InterPro" id="IPR023953">
    <property type="entry name" value="IsdG"/>
</dbReference>
<dbReference type="NCBIfam" id="NF009839">
    <property type="entry name" value="PRK13314.1"/>
    <property type="match status" value="1"/>
</dbReference>
<dbReference type="PANTHER" id="PTHR34474:SF4">
    <property type="entry name" value="HEME OXYGENASE (STAPHYLOBILIN-PRODUCING) 1"/>
    <property type="match status" value="1"/>
</dbReference>
<dbReference type="PANTHER" id="PTHR34474">
    <property type="entry name" value="SIGNAL TRANSDUCTION PROTEIN TRAP"/>
    <property type="match status" value="1"/>
</dbReference>
<dbReference type="Pfam" id="PF03992">
    <property type="entry name" value="ABM"/>
    <property type="match status" value="1"/>
</dbReference>
<dbReference type="SUPFAM" id="SSF54909">
    <property type="entry name" value="Dimeric alpha+beta barrel"/>
    <property type="match status" value="1"/>
</dbReference>
<dbReference type="PROSITE" id="PS51725">
    <property type="entry name" value="ABM"/>
    <property type="match status" value="1"/>
</dbReference>
<organism>
    <name type="scientific">Bacillus mycoides (strain KBAB4)</name>
    <name type="common">Bacillus weihenstephanensis</name>
    <dbReference type="NCBI Taxonomy" id="315730"/>
    <lineage>
        <taxon>Bacteria</taxon>
        <taxon>Bacillati</taxon>
        <taxon>Bacillota</taxon>
        <taxon>Bacilli</taxon>
        <taxon>Bacillales</taxon>
        <taxon>Bacillaceae</taxon>
        <taxon>Bacillus</taxon>
        <taxon>Bacillus cereus group</taxon>
    </lineage>
</organism>
<reference key="1">
    <citation type="journal article" date="2008" name="Chem. Biol. Interact.">
        <title>Extending the Bacillus cereus group genomics to putative food-borne pathogens of different toxicity.</title>
        <authorList>
            <person name="Lapidus A."/>
            <person name="Goltsman E."/>
            <person name="Auger S."/>
            <person name="Galleron N."/>
            <person name="Segurens B."/>
            <person name="Dossat C."/>
            <person name="Land M.L."/>
            <person name="Broussolle V."/>
            <person name="Brillard J."/>
            <person name="Guinebretiere M.-H."/>
            <person name="Sanchis V."/>
            <person name="Nguen-the C."/>
            <person name="Lereclus D."/>
            <person name="Richardson P."/>
            <person name="Wincker P."/>
            <person name="Weissenbach J."/>
            <person name="Ehrlich S.D."/>
            <person name="Sorokin A."/>
        </authorList>
    </citation>
    <scope>NUCLEOTIDE SEQUENCE [LARGE SCALE GENOMIC DNA]</scope>
    <source>
        <strain>KBAB4</strain>
    </source>
</reference>
<keyword id="KW-0963">Cytoplasm</keyword>
<keyword id="KW-0349">Heme</keyword>
<keyword id="KW-0408">Iron</keyword>
<keyword id="KW-0479">Metal-binding</keyword>
<keyword id="KW-0503">Monooxygenase</keyword>
<keyword id="KW-0560">Oxidoreductase</keyword>
<sequence>MIIVTNTTKITKGNGHKLIERFNKVGKVETMSGFLGLEVLLTQNTVDYDEVTISTRWNAKEDFQGWTKSSAFKDAHSHQGGMPDYILDNKIAYYDVKVVRMPMAAAQ</sequence>
<name>HDOX_BACMK</name>
<accession>A9VJK2</accession>
<comment type="function">
    <text evidence="1">Allows bacterial pathogens to use the host heme as an iron source. Catalyzes the oxidative degradation of the heme macrocyclic porphyrin ring to the biliverdin in the presence of a suitable electron donor such as ascorbate or NADPH--cytochrome P450 reductase, with subsequent release of free iron.</text>
</comment>
<comment type="catalytic activity">
    <reaction evidence="1">
        <text>heme b + 3 reduced [NADPH--hemoprotein reductase] + 3 O2 = biliverdin IXalpha + CO + Fe(2+) + 3 oxidized [NADPH--hemoprotein reductase] + 3 H2O + H(+)</text>
        <dbReference type="Rhea" id="RHEA:21764"/>
        <dbReference type="Rhea" id="RHEA-COMP:11964"/>
        <dbReference type="Rhea" id="RHEA-COMP:11965"/>
        <dbReference type="ChEBI" id="CHEBI:15377"/>
        <dbReference type="ChEBI" id="CHEBI:15378"/>
        <dbReference type="ChEBI" id="CHEBI:15379"/>
        <dbReference type="ChEBI" id="CHEBI:17245"/>
        <dbReference type="ChEBI" id="CHEBI:29033"/>
        <dbReference type="ChEBI" id="CHEBI:57618"/>
        <dbReference type="ChEBI" id="CHEBI:57991"/>
        <dbReference type="ChEBI" id="CHEBI:58210"/>
        <dbReference type="ChEBI" id="CHEBI:60344"/>
        <dbReference type="EC" id="1.14.14.18"/>
    </reaction>
</comment>
<comment type="subunit">
    <text evidence="1">Homodimer.</text>
</comment>
<comment type="subcellular location">
    <subcellularLocation>
        <location evidence="1">Cytoplasm</location>
    </subcellularLocation>
</comment>
<comment type="similarity">
    <text evidence="1">Belongs to the antibiotic biosynthesis monooxygenase family. Heme-degrading monooxygenase IsdG subfamily.</text>
</comment>
<protein>
    <recommendedName>
        <fullName evidence="1">Heme-degrading monooxygenase</fullName>
        <ecNumber evidence="1">1.14.14.18</ecNumber>
    </recommendedName>
    <alternativeName>
        <fullName evidence="1">Heme oxygenase</fullName>
    </alternativeName>
    <alternativeName>
        <fullName evidence="1">Iron-regulated surface determinant</fullName>
    </alternativeName>
    <alternativeName>
        <fullName evidence="1">Iron-responsive surface determinant</fullName>
    </alternativeName>
</protein>
<gene>
    <name evidence="1" type="primary">isdG</name>
    <name type="ordered locus">BcerKBAB4_4370</name>
</gene>